<proteinExistence type="evidence at protein level"/>
<evidence type="ECO:0000250" key="1">
    <source>
        <dbReference type="UniProtKB" id="P0ABE5"/>
    </source>
</evidence>
<evidence type="ECO:0000255" key="2"/>
<evidence type="ECO:0000269" key="3">
    <source>
    </source>
</evidence>
<evidence type="ECO:0000305" key="4"/>
<sequence>MNRFSKTQIYLHWITLLFVAITYAAMELRGWFPKGSSTYLLMRETHYNAGIFVWVLMFSRLIIKHRYSDPSIVPPPPAWQMKAASLMHIMLYITFLALPLLGIALMAYSGKSWSFLGFNVSPFVTPNSEIKALIKNIHETWANIGYFLIAAHAGAALFHHYIQKDNTLLRMMPRRK</sequence>
<organism>
    <name type="scientific">Escherichia coli (strain K12)</name>
    <dbReference type="NCBI Taxonomy" id="83333"/>
    <lineage>
        <taxon>Bacteria</taxon>
        <taxon>Pseudomonadati</taxon>
        <taxon>Pseudomonadota</taxon>
        <taxon>Gammaproteobacteria</taxon>
        <taxon>Enterobacterales</taxon>
        <taxon>Enterobacteriaceae</taxon>
        <taxon>Escherichia</taxon>
    </lineage>
</organism>
<feature type="chain" id="PRO_0000199974" description="Cytochrome b561 homolog 1">
    <location>
        <begin position="1"/>
        <end position="176"/>
    </location>
</feature>
<feature type="topological domain" description="Cytoplasmic" evidence="4">
    <location>
        <begin position="1"/>
        <end position="7"/>
    </location>
</feature>
<feature type="transmembrane region" description="Helical" evidence="2">
    <location>
        <begin position="8"/>
        <end position="28"/>
    </location>
</feature>
<feature type="topological domain" description="Periplasmic" evidence="4">
    <location>
        <begin position="29"/>
        <end position="45"/>
    </location>
</feature>
<feature type="transmembrane region" description="Helical" evidence="2">
    <location>
        <begin position="46"/>
        <end position="63"/>
    </location>
</feature>
<feature type="topological domain" description="Cytoplasmic" evidence="4">
    <location>
        <begin position="64"/>
        <end position="85"/>
    </location>
</feature>
<feature type="transmembrane region" description="Helical" evidence="2">
    <location>
        <begin position="86"/>
        <end position="106"/>
    </location>
</feature>
<feature type="topological domain" description="Periplasmic" evidence="4">
    <location>
        <begin position="107"/>
        <end position="141"/>
    </location>
</feature>
<feature type="transmembrane region" description="Helical" evidence="2">
    <location>
        <begin position="142"/>
        <end position="162"/>
    </location>
</feature>
<feature type="topological domain" description="Cytoplasmic" evidence="3">
    <location>
        <begin position="163"/>
        <end position="176"/>
    </location>
</feature>
<feature type="binding site" description="axial binding residue" evidence="1">
    <location>
        <position position="12"/>
    </location>
    <ligand>
        <name>heme b</name>
        <dbReference type="ChEBI" id="CHEBI:60344"/>
        <label>1</label>
    </ligand>
    <ligandPart>
        <name>Fe</name>
        <dbReference type="ChEBI" id="CHEBI:18248"/>
    </ligandPart>
</feature>
<feature type="binding site" description="axial binding residue" evidence="1">
    <location>
        <position position="46"/>
    </location>
    <ligand>
        <name>heme b</name>
        <dbReference type="ChEBI" id="CHEBI:60344"/>
        <label>2</label>
    </ligand>
    <ligandPart>
        <name>Fe</name>
        <dbReference type="ChEBI" id="CHEBI:18248"/>
    </ligandPart>
</feature>
<feature type="binding site" description="axial binding residue" evidence="1">
    <location>
        <position position="138"/>
    </location>
    <ligand>
        <name>heme b</name>
        <dbReference type="ChEBI" id="CHEBI:60344"/>
        <label>2</label>
    </ligand>
    <ligandPart>
        <name>Fe</name>
        <dbReference type="ChEBI" id="CHEBI:18248"/>
    </ligandPart>
</feature>
<feature type="binding site" description="axial binding residue" evidence="1">
    <location>
        <position position="152"/>
    </location>
    <ligand>
        <name>heme b</name>
        <dbReference type="ChEBI" id="CHEBI:60344"/>
        <label>1</label>
    </ligand>
    <ligandPart>
        <name>Fe</name>
        <dbReference type="ChEBI" id="CHEBI:18248"/>
    </ligandPart>
</feature>
<dbReference type="EMBL" id="U00096">
    <property type="protein sequence ID" value="AAC75040.2"/>
    <property type="molecule type" value="Genomic_DNA"/>
</dbReference>
<dbReference type="EMBL" id="AP009048">
    <property type="protein sequence ID" value="BAA15798.2"/>
    <property type="molecule type" value="Genomic_DNA"/>
</dbReference>
<dbReference type="PIR" id="B64962">
    <property type="entry name" value="B64962"/>
</dbReference>
<dbReference type="RefSeq" id="NP_416483.4">
    <property type="nucleotide sequence ID" value="NC_000913.3"/>
</dbReference>
<dbReference type="RefSeq" id="WP_001079074.1">
    <property type="nucleotide sequence ID" value="NZ_SSTT01000011.1"/>
</dbReference>
<dbReference type="SMR" id="P76345"/>
<dbReference type="BioGRID" id="4260395">
    <property type="interactions" value="6"/>
</dbReference>
<dbReference type="FunCoup" id="P76345">
    <property type="interactions" value="3"/>
</dbReference>
<dbReference type="STRING" id="511145.b1974"/>
<dbReference type="PaxDb" id="511145-b1974"/>
<dbReference type="DNASU" id="946491"/>
<dbReference type="EnsemblBacteria" id="AAC75040">
    <property type="protein sequence ID" value="AAC75040"/>
    <property type="gene ID" value="b1974"/>
</dbReference>
<dbReference type="GeneID" id="946491"/>
<dbReference type="KEGG" id="ecj:JW5323"/>
<dbReference type="KEGG" id="eco:b1974"/>
<dbReference type="KEGG" id="ecoc:C3026_11150"/>
<dbReference type="PATRIC" id="fig|1411691.4.peg.276"/>
<dbReference type="EchoBASE" id="EB3803"/>
<dbReference type="eggNOG" id="COG3038">
    <property type="taxonomic scope" value="Bacteria"/>
</dbReference>
<dbReference type="HOGENOM" id="CLU_095321_3_0_6"/>
<dbReference type="InParanoid" id="P76345"/>
<dbReference type="OMA" id="WQVPQWV"/>
<dbReference type="OrthoDB" id="8589936at2"/>
<dbReference type="PhylomeDB" id="P76345"/>
<dbReference type="BioCyc" id="EcoCyc:G7062-MONOMER"/>
<dbReference type="PRO" id="PR:P76345"/>
<dbReference type="Proteomes" id="UP000000625">
    <property type="component" value="Chromosome"/>
</dbReference>
<dbReference type="GO" id="GO:0005886">
    <property type="term" value="C:plasma membrane"/>
    <property type="evidence" value="ECO:0000314"/>
    <property type="project" value="EcoCyc"/>
</dbReference>
<dbReference type="GO" id="GO:0009055">
    <property type="term" value="F:electron transfer activity"/>
    <property type="evidence" value="ECO:0007669"/>
    <property type="project" value="InterPro"/>
</dbReference>
<dbReference type="GO" id="GO:0020037">
    <property type="term" value="F:heme binding"/>
    <property type="evidence" value="ECO:0000318"/>
    <property type="project" value="GO_Central"/>
</dbReference>
<dbReference type="GO" id="GO:0046872">
    <property type="term" value="F:metal ion binding"/>
    <property type="evidence" value="ECO:0007669"/>
    <property type="project" value="UniProtKB-KW"/>
</dbReference>
<dbReference type="GO" id="GO:0022904">
    <property type="term" value="P:respiratory electron transport chain"/>
    <property type="evidence" value="ECO:0007669"/>
    <property type="project" value="InterPro"/>
</dbReference>
<dbReference type="InterPro" id="IPR011577">
    <property type="entry name" value="Cyt_b561_bac/Ni-Hgenase"/>
</dbReference>
<dbReference type="InterPro" id="IPR052168">
    <property type="entry name" value="Cytochrome_b561_oxidase"/>
</dbReference>
<dbReference type="InterPro" id="IPR016174">
    <property type="entry name" value="Di-haem_cyt_TM"/>
</dbReference>
<dbReference type="PANTHER" id="PTHR30529">
    <property type="entry name" value="CYTOCHROME B561"/>
    <property type="match status" value="1"/>
</dbReference>
<dbReference type="PANTHER" id="PTHR30529:SF3">
    <property type="entry name" value="CYTOCHROME B561 HOMOLOG 1"/>
    <property type="match status" value="1"/>
</dbReference>
<dbReference type="Pfam" id="PF01292">
    <property type="entry name" value="Ni_hydr_CYTB"/>
    <property type="match status" value="1"/>
</dbReference>
<dbReference type="SUPFAM" id="SSF81342">
    <property type="entry name" value="Transmembrane di-heme cytochromes"/>
    <property type="match status" value="1"/>
</dbReference>
<protein>
    <recommendedName>
        <fullName>Cytochrome b561 homolog 1</fullName>
    </recommendedName>
</protein>
<keyword id="KW-0997">Cell inner membrane</keyword>
<keyword id="KW-1003">Cell membrane</keyword>
<keyword id="KW-0249">Electron transport</keyword>
<keyword id="KW-0349">Heme</keyword>
<keyword id="KW-0408">Iron</keyword>
<keyword id="KW-0472">Membrane</keyword>
<keyword id="KW-0479">Metal-binding</keyword>
<keyword id="KW-1185">Reference proteome</keyword>
<keyword id="KW-0812">Transmembrane</keyword>
<keyword id="KW-1133">Transmembrane helix</keyword>
<keyword id="KW-0813">Transport</keyword>
<name>C56H1_ECOLI</name>
<gene>
    <name type="primary">yodB</name>
    <name type="ordered locus">b1974</name>
    <name type="ordered locus">JW5323</name>
</gene>
<accession>P76345</accession>
<accession>P94749</accession>
<comment type="cofactor">
    <cofactor evidence="1">
        <name>heme b</name>
        <dbReference type="ChEBI" id="CHEBI:60344"/>
    </cofactor>
    <text evidence="1">Binds 2 heme b (iron-protoporphyrin IX) groups per molecule.</text>
</comment>
<comment type="subcellular location">
    <subcellularLocation>
        <location evidence="3">Cell inner membrane</location>
        <topology evidence="2">Multi-pass membrane protein</topology>
    </subcellularLocation>
</comment>
<comment type="similarity">
    <text evidence="4">Belongs to the cytochrome b561 family.</text>
</comment>
<reference key="1">
    <citation type="journal article" date="1996" name="DNA Res.">
        <title>A 460-kb DNA sequence of the Escherichia coli K-12 genome corresponding to the 40.1-50.0 min region on the linkage map.</title>
        <authorList>
            <person name="Itoh T."/>
            <person name="Aiba H."/>
            <person name="Baba T."/>
            <person name="Fujita K."/>
            <person name="Hayashi K."/>
            <person name="Inada T."/>
            <person name="Isono K."/>
            <person name="Kasai H."/>
            <person name="Kimura S."/>
            <person name="Kitakawa M."/>
            <person name="Kitagawa M."/>
            <person name="Makino K."/>
            <person name="Miki T."/>
            <person name="Mizobuchi K."/>
            <person name="Mori H."/>
            <person name="Mori T."/>
            <person name="Motomura K."/>
            <person name="Nakade S."/>
            <person name="Nakamura Y."/>
            <person name="Nashimoto H."/>
            <person name="Nishio Y."/>
            <person name="Oshima T."/>
            <person name="Saito N."/>
            <person name="Sampei G."/>
            <person name="Seki Y."/>
            <person name="Sivasundaram S."/>
            <person name="Tagami H."/>
            <person name="Takeda J."/>
            <person name="Takemoto K."/>
            <person name="Wada C."/>
            <person name="Yamamoto Y."/>
            <person name="Horiuchi T."/>
        </authorList>
    </citation>
    <scope>NUCLEOTIDE SEQUENCE [LARGE SCALE GENOMIC DNA]</scope>
    <source>
        <strain>K12 / W3110 / ATCC 27325 / DSM 5911</strain>
    </source>
</reference>
<reference key="2">
    <citation type="journal article" date="1997" name="Science">
        <title>The complete genome sequence of Escherichia coli K-12.</title>
        <authorList>
            <person name="Blattner F.R."/>
            <person name="Plunkett G. III"/>
            <person name="Bloch C.A."/>
            <person name="Perna N.T."/>
            <person name="Burland V."/>
            <person name="Riley M."/>
            <person name="Collado-Vides J."/>
            <person name="Glasner J.D."/>
            <person name="Rode C.K."/>
            <person name="Mayhew G.F."/>
            <person name="Gregor J."/>
            <person name="Davis N.W."/>
            <person name="Kirkpatrick H.A."/>
            <person name="Goeden M.A."/>
            <person name="Rose D.J."/>
            <person name="Mau B."/>
            <person name="Shao Y."/>
        </authorList>
    </citation>
    <scope>NUCLEOTIDE SEQUENCE [LARGE SCALE GENOMIC DNA]</scope>
    <source>
        <strain>K12 / MG1655 / ATCC 47076</strain>
    </source>
</reference>
<reference key="3">
    <citation type="journal article" date="2006" name="Mol. Syst. Biol.">
        <title>Highly accurate genome sequences of Escherichia coli K-12 strains MG1655 and W3110.</title>
        <authorList>
            <person name="Hayashi K."/>
            <person name="Morooka N."/>
            <person name="Yamamoto Y."/>
            <person name="Fujita K."/>
            <person name="Isono K."/>
            <person name="Choi S."/>
            <person name="Ohtsubo E."/>
            <person name="Baba T."/>
            <person name="Wanner B.L."/>
            <person name="Mori H."/>
            <person name="Horiuchi T."/>
        </authorList>
    </citation>
    <scope>NUCLEOTIDE SEQUENCE [LARGE SCALE GENOMIC DNA]</scope>
    <source>
        <strain>K12 / W3110 / ATCC 27325 / DSM 5911</strain>
    </source>
</reference>
<reference key="4">
    <citation type="journal article" date="2005" name="Science">
        <title>Global topology analysis of the Escherichia coli inner membrane proteome.</title>
        <authorList>
            <person name="Daley D.O."/>
            <person name="Rapp M."/>
            <person name="Granseth E."/>
            <person name="Melen K."/>
            <person name="Drew D."/>
            <person name="von Heijne G."/>
        </authorList>
    </citation>
    <scope>TOPOLOGY [LARGE SCALE ANALYSIS]</scope>
    <scope>SUBCELLULAR LOCATION</scope>
    <source>
        <strain>K12 / MG1655 / ATCC 47076</strain>
    </source>
</reference>